<dbReference type="EC" id="1.97.1.12" evidence="2"/>
<dbReference type="EMBL" id="AJ007508">
    <property type="protein sequence ID" value="CAB96963.1"/>
    <property type="molecule type" value="Genomic_DNA"/>
</dbReference>
<dbReference type="RefSeq" id="YP_009117887.1">
    <property type="nucleotide sequence ID" value="NC_026301.1"/>
</dbReference>
<dbReference type="SMR" id="Q9MRI1"/>
<dbReference type="GeneID" id="22975718"/>
<dbReference type="GO" id="GO:0009535">
    <property type="term" value="C:chloroplast thylakoid membrane"/>
    <property type="evidence" value="ECO:0007669"/>
    <property type="project" value="UniProtKB-SubCell"/>
</dbReference>
<dbReference type="GO" id="GO:0009522">
    <property type="term" value="C:photosystem I"/>
    <property type="evidence" value="ECO:0007669"/>
    <property type="project" value="UniProtKB-KW"/>
</dbReference>
<dbReference type="GO" id="GO:0051539">
    <property type="term" value="F:4 iron, 4 sulfur cluster binding"/>
    <property type="evidence" value="ECO:0007669"/>
    <property type="project" value="UniProtKB-KW"/>
</dbReference>
<dbReference type="GO" id="GO:0009055">
    <property type="term" value="F:electron transfer activity"/>
    <property type="evidence" value="ECO:0007669"/>
    <property type="project" value="UniProtKB-UniRule"/>
</dbReference>
<dbReference type="GO" id="GO:0046872">
    <property type="term" value="F:metal ion binding"/>
    <property type="evidence" value="ECO:0007669"/>
    <property type="project" value="UniProtKB-KW"/>
</dbReference>
<dbReference type="GO" id="GO:0016491">
    <property type="term" value="F:oxidoreductase activity"/>
    <property type="evidence" value="ECO:0007669"/>
    <property type="project" value="UniProtKB-KW"/>
</dbReference>
<dbReference type="GO" id="GO:0009773">
    <property type="term" value="P:photosynthetic electron transport in photosystem I"/>
    <property type="evidence" value="ECO:0007669"/>
    <property type="project" value="InterPro"/>
</dbReference>
<dbReference type="FunFam" id="3.30.70.20:FF:000001">
    <property type="entry name" value="Photosystem I iron-sulfur center"/>
    <property type="match status" value="1"/>
</dbReference>
<dbReference type="Gene3D" id="3.30.70.20">
    <property type="match status" value="1"/>
</dbReference>
<dbReference type="HAMAP" id="MF_01303">
    <property type="entry name" value="PSI_PsaC"/>
    <property type="match status" value="1"/>
</dbReference>
<dbReference type="InterPro" id="IPR017896">
    <property type="entry name" value="4Fe4S_Fe-S-bd"/>
</dbReference>
<dbReference type="InterPro" id="IPR017900">
    <property type="entry name" value="4Fe4S_Fe_S_CS"/>
</dbReference>
<dbReference type="InterPro" id="IPR050157">
    <property type="entry name" value="PSI_iron-sulfur_center"/>
</dbReference>
<dbReference type="InterPro" id="IPR017491">
    <property type="entry name" value="PSI_PsaC"/>
</dbReference>
<dbReference type="NCBIfam" id="TIGR03048">
    <property type="entry name" value="PS_I_psaC"/>
    <property type="match status" value="1"/>
</dbReference>
<dbReference type="PANTHER" id="PTHR24960:SF79">
    <property type="entry name" value="PHOTOSYSTEM I IRON-SULFUR CENTER"/>
    <property type="match status" value="1"/>
</dbReference>
<dbReference type="PANTHER" id="PTHR24960">
    <property type="entry name" value="PHOTOSYSTEM I IRON-SULFUR CENTER-RELATED"/>
    <property type="match status" value="1"/>
</dbReference>
<dbReference type="Pfam" id="PF12838">
    <property type="entry name" value="Fer4_7"/>
    <property type="match status" value="1"/>
</dbReference>
<dbReference type="SUPFAM" id="SSF54862">
    <property type="entry name" value="4Fe-4S ferredoxins"/>
    <property type="match status" value="1"/>
</dbReference>
<dbReference type="PROSITE" id="PS00198">
    <property type="entry name" value="4FE4S_FER_1"/>
    <property type="match status" value="2"/>
</dbReference>
<dbReference type="PROSITE" id="PS51379">
    <property type="entry name" value="4FE4S_FER_2"/>
    <property type="match status" value="2"/>
</dbReference>
<reference key="1">
    <citation type="submission" date="1998-07" db="EMBL/GenBank/DDBJ databases">
        <title>Anthophytes: common ancestry or common characters?</title>
        <authorList>
            <person name="Hansen A."/>
            <person name="Martin W."/>
            <person name="Samigullin T."/>
            <person name="Antonov A."/>
        </authorList>
    </citation>
    <scope>NUCLEOTIDE SEQUENCE [GENOMIC DNA]</scope>
</reference>
<comment type="function">
    <text evidence="2">Apoprotein for the two 4Fe-4S centers FA and FB of photosystem I (PSI); essential for photochemical activity. FB is the terminal electron acceptor of PSI, donating electrons to ferredoxin. The C-terminus interacts with PsaA/B/D and helps assemble the protein into the PSI complex. Required for binding of PsaD and PsaE to PSI. PSI is a plastocyanin-ferredoxin oxidoreductase, converting photonic excitation into a charge separation, which transfers an electron from the donor P700 chlorophyll pair to the spectroscopically characterized acceptors A0, A1, FX, FA and FB in turn.</text>
</comment>
<comment type="catalytic activity">
    <reaction evidence="2">
        <text>reduced [plastocyanin] + hnu + oxidized [2Fe-2S]-[ferredoxin] = oxidized [plastocyanin] + reduced [2Fe-2S]-[ferredoxin]</text>
        <dbReference type="Rhea" id="RHEA:30407"/>
        <dbReference type="Rhea" id="RHEA-COMP:10000"/>
        <dbReference type="Rhea" id="RHEA-COMP:10001"/>
        <dbReference type="Rhea" id="RHEA-COMP:10039"/>
        <dbReference type="Rhea" id="RHEA-COMP:10040"/>
        <dbReference type="ChEBI" id="CHEBI:29036"/>
        <dbReference type="ChEBI" id="CHEBI:30212"/>
        <dbReference type="ChEBI" id="CHEBI:33737"/>
        <dbReference type="ChEBI" id="CHEBI:33738"/>
        <dbReference type="ChEBI" id="CHEBI:49552"/>
        <dbReference type="EC" id="1.97.1.12"/>
    </reaction>
</comment>
<comment type="cofactor">
    <cofactor evidence="2">
        <name>[4Fe-4S] cluster</name>
        <dbReference type="ChEBI" id="CHEBI:49883"/>
    </cofactor>
    <text evidence="2">Binds 2 [4Fe-4S] clusters. Cluster 2 is most probably the spectroscopically characterized electron acceptor FA and cluster 1 is most probably FB.</text>
</comment>
<comment type="subunit">
    <text evidence="2">The eukaryotic PSI reaction center is composed of at least 11 subunits.</text>
</comment>
<comment type="subcellular location">
    <subcellularLocation>
        <location evidence="2">Plastid</location>
        <location evidence="2">Chloroplast thylakoid membrane</location>
        <topology evidence="2">Peripheral membrane protein</topology>
        <orientation evidence="2">Stromal side</orientation>
    </subcellularLocation>
</comment>
<proteinExistence type="inferred from homology"/>
<name>PSAC_GNEGN</name>
<organism>
    <name type="scientific">Gnetum gnemon</name>
    <name type="common">Spanish joint-fir</name>
    <name type="synonym">Gnetum acutatum</name>
    <dbReference type="NCBI Taxonomy" id="3382"/>
    <lineage>
        <taxon>Eukaryota</taxon>
        <taxon>Viridiplantae</taxon>
        <taxon>Streptophyta</taxon>
        <taxon>Embryophyta</taxon>
        <taxon>Tracheophyta</taxon>
        <taxon>Spermatophyta</taxon>
        <taxon>Gnetopsida</taxon>
        <taxon>Gnetidae</taxon>
        <taxon>Gnetales</taxon>
        <taxon>Gnetaceae</taxon>
        <taxon>Gnetum</taxon>
    </lineage>
</organism>
<protein>
    <recommendedName>
        <fullName evidence="2">Photosystem I iron-sulfur center</fullName>
        <ecNumber evidence="2">1.97.1.12</ecNumber>
    </recommendedName>
    <alternativeName>
        <fullName evidence="2">9 kDa polypeptide</fullName>
    </alternativeName>
    <alternativeName>
        <fullName evidence="2">PSI-C</fullName>
    </alternativeName>
    <alternativeName>
        <fullName evidence="2">Photosystem I subunit VII</fullName>
    </alternativeName>
    <alternativeName>
        <fullName evidence="2">PsaC</fullName>
    </alternativeName>
</protein>
<geneLocation type="chloroplast"/>
<accession>Q9MRI1</accession>
<gene>
    <name evidence="2" type="primary">psaC</name>
</gene>
<feature type="initiator methionine" description="Removed" evidence="1">
    <location>
        <position position="1"/>
    </location>
</feature>
<feature type="chain" id="PRO_0000061981" description="Photosystem I iron-sulfur center">
    <location>
        <begin position="2"/>
        <end position="81"/>
    </location>
</feature>
<feature type="domain" description="4Fe-4S ferredoxin-type 1" evidence="2">
    <location>
        <begin position="2"/>
        <end position="31"/>
    </location>
</feature>
<feature type="domain" description="4Fe-4S ferredoxin-type 2" evidence="2">
    <location>
        <begin position="39"/>
        <end position="68"/>
    </location>
</feature>
<feature type="binding site" evidence="2">
    <location>
        <position position="11"/>
    </location>
    <ligand>
        <name>[4Fe-4S] cluster</name>
        <dbReference type="ChEBI" id="CHEBI:49883"/>
        <label>1</label>
    </ligand>
</feature>
<feature type="binding site" evidence="2">
    <location>
        <position position="14"/>
    </location>
    <ligand>
        <name>[4Fe-4S] cluster</name>
        <dbReference type="ChEBI" id="CHEBI:49883"/>
        <label>1</label>
    </ligand>
</feature>
<feature type="binding site" evidence="2">
    <location>
        <position position="17"/>
    </location>
    <ligand>
        <name>[4Fe-4S] cluster</name>
        <dbReference type="ChEBI" id="CHEBI:49883"/>
        <label>1</label>
    </ligand>
</feature>
<feature type="binding site" evidence="2">
    <location>
        <position position="21"/>
    </location>
    <ligand>
        <name>[4Fe-4S] cluster</name>
        <dbReference type="ChEBI" id="CHEBI:49883"/>
        <label>2</label>
    </ligand>
</feature>
<feature type="binding site" evidence="2">
    <location>
        <position position="48"/>
    </location>
    <ligand>
        <name>[4Fe-4S] cluster</name>
        <dbReference type="ChEBI" id="CHEBI:49883"/>
        <label>2</label>
    </ligand>
</feature>
<feature type="binding site" evidence="2">
    <location>
        <position position="51"/>
    </location>
    <ligand>
        <name>[4Fe-4S] cluster</name>
        <dbReference type="ChEBI" id="CHEBI:49883"/>
        <label>2</label>
    </ligand>
</feature>
<feature type="binding site" evidence="2">
    <location>
        <position position="54"/>
    </location>
    <ligand>
        <name>[4Fe-4S] cluster</name>
        <dbReference type="ChEBI" id="CHEBI:49883"/>
        <label>2</label>
    </ligand>
</feature>
<feature type="binding site" evidence="2">
    <location>
        <position position="58"/>
    </location>
    <ligand>
        <name>[4Fe-4S] cluster</name>
        <dbReference type="ChEBI" id="CHEBI:49883"/>
        <label>1</label>
    </ligand>
</feature>
<keyword id="KW-0004">4Fe-4S</keyword>
<keyword id="KW-0150">Chloroplast</keyword>
<keyword id="KW-0249">Electron transport</keyword>
<keyword id="KW-0408">Iron</keyword>
<keyword id="KW-0411">Iron-sulfur</keyword>
<keyword id="KW-0472">Membrane</keyword>
<keyword id="KW-0479">Metal-binding</keyword>
<keyword id="KW-0560">Oxidoreductase</keyword>
<keyword id="KW-0602">Photosynthesis</keyword>
<keyword id="KW-0603">Photosystem I</keyword>
<keyword id="KW-0934">Plastid</keyword>
<keyword id="KW-0677">Repeat</keyword>
<keyword id="KW-0793">Thylakoid</keyword>
<keyword id="KW-0813">Transport</keyword>
<evidence type="ECO:0000250" key="1"/>
<evidence type="ECO:0000255" key="2">
    <source>
        <dbReference type="HAMAP-Rule" id="MF_01303"/>
    </source>
</evidence>
<sequence length="81" mass="8996">MAHSVKIYDTCIGCTQCVRACPTDVLEMVPWNGCRAKQIASAPRTEDCVGCKRCESACPTDYLSVRVYLRNEVTRSMGLAY</sequence>